<organism>
    <name type="scientific">Burkholderia mallei (strain SAVP1)</name>
    <dbReference type="NCBI Taxonomy" id="320388"/>
    <lineage>
        <taxon>Bacteria</taxon>
        <taxon>Pseudomonadati</taxon>
        <taxon>Pseudomonadota</taxon>
        <taxon>Betaproteobacteria</taxon>
        <taxon>Burkholderiales</taxon>
        <taxon>Burkholderiaceae</taxon>
        <taxon>Burkholderia</taxon>
        <taxon>pseudomallei group</taxon>
    </lineage>
</organism>
<accession>A1V6B0</accession>
<comment type="function">
    <text evidence="1">Involved in peptide bond synthesis. Stimulates efficient translation and peptide-bond synthesis on native or reconstituted 70S ribosomes in vitro. Probably functions indirectly by altering the affinity of the ribosome for aminoacyl-tRNA, thus increasing their reactivity as acceptors for peptidyl transferase.</text>
</comment>
<comment type="pathway">
    <text evidence="1">Protein biosynthesis; polypeptide chain elongation.</text>
</comment>
<comment type="subcellular location">
    <subcellularLocation>
        <location evidence="1">Cytoplasm</location>
    </subcellularLocation>
</comment>
<comment type="similarity">
    <text evidence="1">Belongs to the elongation factor P family.</text>
</comment>
<proteinExistence type="inferred from homology"/>
<sequence>MKTAQELRVGNVVMIGNDAWVVSKTEYNKSGRNAAVVKMKLKNLLNGGGQESVYKADDKFEVVVLDRKEVTYSYFADPMYVFMDADYNQYEVEAEMMGDALNYLEDGMACEVVFYNEKAISVELPTILVREITYTEPAVKGDTSSGKVLKNAKLATGFELQVPLFCNTGDKIEIDTRTNEYRSRA</sequence>
<reference key="1">
    <citation type="journal article" date="2010" name="Genome Biol. Evol.">
        <title>Continuing evolution of Burkholderia mallei through genome reduction and large-scale rearrangements.</title>
        <authorList>
            <person name="Losada L."/>
            <person name="Ronning C.M."/>
            <person name="DeShazer D."/>
            <person name="Woods D."/>
            <person name="Fedorova N."/>
            <person name="Kim H.S."/>
            <person name="Shabalina S.A."/>
            <person name="Pearson T.R."/>
            <person name="Brinkac L."/>
            <person name="Tan P."/>
            <person name="Nandi T."/>
            <person name="Crabtree J."/>
            <person name="Badger J."/>
            <person name="Beckstrom-Sternberg S."/>
            <person name="Saqib M."/>
            <person name="Schutzer S.E."/>
            <person name="Keim P."/>
            <person name="Nierman W.C."/>
        </authorList>
    </citation>
    <scope>NUCLEOTIDE SEQUENCE [LARGE SCALE GENOMIC DNA]</scope>
    <source>
        <strain>SAVP1</strain>
    </source>
</reference>
<keyword id="KW-0963">Cytoplasm</keyword>
<keyword id="KW-0251">Elongation factor</keyword>
<keyword id="KW-0648">Protein biosynthesis</keyword>
<gene>
    <name evidence="1" type="primary">efp</name>
    <name type="ordered locus">BMASAVP1_A2459</name>
</gene>
<protein>
    <recommendedName>
        <fullName evidence="1">Elongation factor P</fullName>
        <shortName evidence="1">EF-P</shortName>
    </recommendedName>
</protein>
<feature type="chain" id="PRO_1000010699" description="Elongation factor P">
    <location>
        <begin position="1"/>
        <end position="185"/>
    </location>
</feature>
<evidence type="ECO:0000255" key="1">
    <source>
        <dbReference type="HAMAP-Rule" id="MF_00141"/>
    </source>
</evidence>
<name>EFP_BURMS</name>
<dbReference type="EMBL" id="CP000526">
    <property type="protein sequence ID" value="ABM52088.1"/>
    <property type="molecule type" value="Genomic_DNA"/>
</dbReference>
<dbReference type="RefSeq" id="WP_004193484.1">
    <property type="nucleotide sequence ID" value="NC_008785.1"/>
</dbReference>
<dbReference type="SMR" id="A1V6B0"/>
<dbReference type="GeneID" id="93061002"/>
<dbReference type="KEGG" id="bmv:BMASAVP1_A2459"/>
<dbReference type="HOGENOM" id="CLU_074944_2_1_4"/>
<dbReference type="UniPathway" id="UPA00345"/>
<dbReference type="GO" id="GO:0005737">
    <property type="term" value="C:cytoplasm"/>
    <property type="evidence" value="ECO:0007669"/>
    <property type="project" value="UniProtKB-SubCell"/>
</dbReference>
<dbReference type="GO" id="GO:0003746">
    <property type="term" value="F:translation elongation factor activity"/>
    <property type="evidence" value="ECO:0007669"/>
    <property type="project" value="UniProtKB-UniRule"/>
</dbReference>
<dbReference type="GO" id="GO:0043043">
    <property type="term" value="P:peptide biosynthetic process"/>
    <property type="evidence" value="ECO:0007669"/>
    <property type="project" value="InterPro"/>
</dbReference>
<dbReference type="CDD" id="cd04470">
    <property type="entry name" value="S1_EF-P_repeat_1"/>
    <property type="match status" value="1"/>
</dbReference>
<dbReference type="CDD" id="cd05794">
    <property type="entry name" value="S1_EF-P_repeat_2"/>
    <property type="match status" value="1"/>
</dbReference>
<dbReference type="FunFam" id="2.30.30.30:FF:000003">
    <property type="entry name" value="Elongation factor P"/>
    <property type="match status" value="1"/>
</dbReference>
<dbReference type="FunFam" id="2.40.50.140:FF:000004">
    <property type="entry name" value="Elongation factor P"/>
    <property type="match status" value="1"/>
</dbReference>
<dbReference type="FunFam" id="2.40.50.140:FF:000009">
    <property type="entry name" value="Elongation factor P"/>
    <property type="match status" value="1"/>
</dbReference>
<dbReference type="Gene3D" id="2.30.30.30">
    <property type="match status" value="1"/>
</dbReference>
<dbReference type="Gene3D" id="2.40.50.140">
    <property type="entry name" value="Nucleic acid-binding proteins"/>
    <property type="match status" value="2"/>
</dbReference>
<dbReference type="HAMAP" id="MF_00141">
    <property type="entry name" value="EF_P"/>
    <property type="match status" value="1"/>
</dbReference>
<dbReference type="InterPro" id="IPR015365">
    <property type="entry name" value="Elong-fact-P_C"/>
</dbReference>
<dbReference type="InterPro" id="IPR012340">
    <property type="entry name" value="NA-bd_OB-fold"/>
</dbReference>
<dbReference type="InterPro" id="IPR014722">
    <property type="entry name" value="Rib_uL2_dom2"/>
</dbReference>
<dbReference type="InterPro" id="IPR020599">
    <property type="entry name" value="Transl_elong_fac_P/YeiP"/>
</dbReference>
<dbReference type="InterPro" id="IPR013185">
    <property type="entry name" value="Transl_elong_KOW-like"/>
</dbReference>
<dbReference type="InterPro" id="IPR001059">
    <property type="entry name" value="Transl_elong_P/YeiP_cen"/>
</dbReference>
<dbReference type="InterPro" id="IPR013852">
    <property type="entry name" value="Transl_elong_P/YeiP_CS"/>
</dbReference>
<dbReference type="InterPro" id="IPR011768">
    <property type="entry name" value="Transl_elongation_fac_P"/>
</dbReference>
<dbReference type="InterPro" id="IPR008991">
    <property type="entry name" value="Translation_prot_SH3-like_sf"/>
</dbReference>
<dbReference type="NCBIfam" id="TIGR00038">
    <property type="entry name" value="efp"/>
    <property type="match status" value="1"/>
</dbReference>
<dbReference type="NCBIfam" id="NF001810">
    <property type="entry name" value="PRK00529.1"/>
    <property type="match status" value="1"/>
</dbReference>
<dbReference type="PANTHER" id="PTHR30053">
    <property type="entry name" value="ELONGATION FACTOR P"/>
    <property type="match status" value="1"/>
</dbReference>
<dbReference type="PANTHER" id="PTHR30053:SF12">
    <property type="entry name" value="ELONGATION FACTOR P (EF-P) FAMILY PROTEIN"/>
    <property type="match status" value="1"/>
</dbReference>
<dbReference type="Pfam" id="PF01132">
    <property type="entry name" value="EFP"/>
    <property type="match status" value="1"/>
</dbReference>
<dbReference type="Pfam" id="PF08207">
    <property type="entry name" value="EFP_N"/>
    <property type="match status" value="1"/>
</dbReference>
<dbReference type="Pfam" id="PF09285">
    <property type="entry name" value="Elong-fact-P_C"/>
    <property type="match status" value="1"/>
</dbReference>
<dbReference type="PIRSF" id="PIRSF005901">
    <property type="entry name" value="EF-P"/>
    <property type="match status" value="1"/>
</dbReference>
<dbReference type="SMART" id="SM01185">
    <property type="entry name" value="EFP"/>
    <property type="match status" value="1"/>
</dbReference>
<dbReference type="SMART" id="SM00841">
    <property type="entry name" value="Elong-fact-P_C"/>
    <property type="match status" value="1"/>
</dbReference>
<dbReference type="SUPFAM" id="SSF50249">
    <property type="entry name" value="Nucleic acid-binding proteins"/>
    <property type="match status" value="2"/>
</dbReference>
<dbReference type="SUPFAM" id="SSF50104">
    <property type="entry name" value="Translation proteins SH3-like domain"/>
    <property type="match status" value="1"/>
</dbReference>
<dbReference type="PROSITE" id="PS01275">
    <property type="entry name" value="EFP"/>
    <property type="match status" value="1"/>
</dbReference>